<proteinExistence type="inferred from homology"/>
<feature type="chain" id="PRO_0000159938" description="3-dehydroquinate dehydratase">
    <location>
        <begin position="1"/>
        <end position="149"/>
    </location>
</feature>
<feature type="active site" description="Proton acceptor" evidence="1">
    <location>
        <position position="26"/>
    </location>
</feature>
<feature type="active site" description="Proton donor" evidence="1">
    <location>
        <position position="103"/>
    </location>
</feature>
<feature type="binding site" evidence="1">
    <location>
        <position position="77"/>
    </location>
    <ligand>
        <name>substrate</name>
    </ligand>
</feature>
<feature type="binding site" evidence="1">
    <location>
        <position position="83"/>
    </location>
    <ligand>
        <name>substrate</name>
    </ligand>
</feature>
<feature type="binding site" evidence="1">
    <location>
        <position position="90"/>
    </location>
    <ligand>
        <name>substrate</name>
    </ligand>
</feature>
<feature type="binding site" evidence="1">
    <location>
        <begin position="104"/>
        <end position="105"/>
    </location>
    <ligand>
        <name>substrate</name>
    </ligand>
</feature>
<feature type="binding site" evidence="1">
    <location>
        <position position="114"/>
    </location>
    <ligand>
        <name>substrate</name>
    </ligand>
</feature>
<feature type="site" description="Transition state stabilizer" evidence="1">
    <location>
        <position position="21"/>
    </location>
</feature>
<name>AROQ_VIBPA</name>
<reference key="1">
    <citation type="journal article" date="2003" name="Lancet">
        <title>Genome sequence of Vibrio parahaemolyticus: a pathogenic mechanism distinct from that of V. cholerae.</title>
        <authorList>
            <person name="Makino K."/>
            <person name="Oshima K."/>
            <person name="Kurokawa K."/>
            <person name="Yokoyama K."/>
            <person name="Uda T."/>
            <person name="Tagomori K."/>
            <person name="Iijima Y."/>
            <person name="Najima M."/>
            <person name="Nakano M."/>
            <person name="Yamashita A."/>
            <person name="Kubota Y."/>
            <person name="Kimura S."/>
            <person name="Yasunaga T."/>
            <person name="Honda T."/>
            <person name="Shinagawa H."/>
            <person name="Hattori M."/>
            <person name="Iida T."/>
        </authorList>
    </citation>
    <scope>NUCLEOTIDE SEQUENCE [LARGE SCALE GENOMIC DNA]</scope>
    <source>
        <strain>RIMD 2210633</strain>
    </source>
</reference>
<dbReference type="EC" id="4.2.1.10" evidence="1"/>
<dbReference type="EMBL" id="BA000031">
    <property type="protein sequence ID" value="BAC61142.1"/>
    <property type="molecule type" value="Genomic_DNA"/>
</dbReference>
<dbReference type="RefSeq" id="NP_799258.1">
    <property type="nucleotide sequence ID" value="NC_004603.1"/>
</dbReference>
<dbReference type="RefSeq" id="WP_005478606.1">
    <property type="nucleotide sequence ID" value="NC_004603.1"/>
</dbReference>
<dbReference type="SMR" id="Q87KU6"/>
<dbReference type="GeneID" id="1190442"/>
<dbReference type="KEGG" id="vpa:VP2879"/>
<dbReference type="PATRIC" id="fig|223926.6.peg.2770"/>
<dbReference type="eggNOG" id="COG0757">
    <property type="taxonomic scope" value="Bacteria"/>
</dbReference>
<dbReference type="HOGENOM" id="CLU_090968_1_0_6"/>
<dbReference type="UniPathway" id="UPA00053">
    <property type="reaction ID" value="UER00086"/>
</dbReference>
<dbReference type="Proteomes" id="UP000002493">
    <property type="component" value="Chromosome 1"/>
</dbReference>
<dbReference type="GO" id="GO:0003855">
    <property type="term" value="F:3-dehydroquinate dehydratase activity"/>
    <property type="evidence" value="ECO:0007669"/>
    <property type="project" value="UniProtKB-UniRule"/>
</dbReference>
<dbReference type="GO" id="GO:0008652">
    <property type="term" value="P:amino acid biosynthetic process"/>
    <property type="evidence" value="ECO:0007669"/>
    <property type="project" value="UniProtKB-KW"/>
</dbReference>
<dbReference type="GO" id="GO:0009073">
    <property type="term" value="P:aromatic amino acid family biosynthetic process"/>
    <property type="evidence" value="ECO:0007669"/>
    <property type="project" value="UniProtKB-KW"/>
</dbReference>
<dbReference type="GO" id="GO:0009423">
    <property type="term" value="P:chorismate biosynthetic process"/>
    <property type="evidence" value="ECO:0007669"/>
    <property type="project" value="UniProtKB-UniRule"/>
</dbReference>
<dbReference type="GO" id="GO:0019631">
    <property type="term" value="P:quinate catabolic process"/>
    <property type="evidence" value="ECO:0007669"/>
    <property type="project" value="TreeGrafter"/>
</dbReference>
<dbReference type="CDD" id="cd00466">
    <property type="entry name" value="DHQase_II"/>
    <property type="match status" value="1"/>
</dbReference>
<dbReference type="Gene3D" id="3.40.50.9100">
    <property type="entry name" value="Dehydroquinase, class II"/>
    <property type="match status" value="1"/>
</dbReference>
<dbReference type="HAMAP" id="MF_00169">
    <property type="entry name" value="AroQ"/>
    <property type="match status" value="1"/>
</dbReference>
<dbReference type="InterPro" id="IPR001874">
    <property type="entry name" value="DHquinase_II"/>
</dbReference>
<dbReference type="InterPro" id="IPR018509">
    <property type="entry name" value="DHquinase_II_CS"/>
</dbReference>
<dbReference type="InterPro" id="IPR036441">
    <property type="entry name" value="DHquinase_II_sf"/>
</dbReference>
<dbReference type="NCBIfam" id="TIGR01088">
    <property type="entry name" value="aroQ"/>
    <property type="match status" value="1"/>
</dbReference>
<dbReference type="NCBIfam" id="NF003804">
    <property type="entry name" value="PRK05395.1-1"/>
    <property type="match status" value="1"/>
</dbReference>
<dbReference type="NCBIfam" id="NF003805">
    <property type="entry name" value="PRK05395.1-2"/>
    <property type="match status" value="1"/>
</dbReference>
<dbReference type="NCBIfam" id="NF003806">
    <property type="entry name" value="PRK05395.1-3"/>
    <property type="match status" value="1"/>
</dbReference>
<dbReference type="NCBIfam" id="NF003807">
    <property type="entry name" value="PRK05395.1-4"/>
    <property type="match status" value="1"/>
</dbReference>
<dbReference type="PANTHER" id="PTHR21272">
    <property type="entry name" value="CATABOLIC 3-DEHYDROQUINASE"/>
    <property type="match status" value="1"/>
</dbReference>
<dbReference type="PANTHER" id="PTHR21272:SF3">
    <property type="entry name" value="CATABOLIC 3-DEHYDROQUINASE"/>
    <property type="match status" value="1"/>
</dbReference>
<dbReference type="Pfam" id="PF01220">
    <property type="entry name" value="DHquinase_II"/>
    <property type="match status" value="1"/>
</dbReference>
<dbReference type="PIRSF" id="PIRSF001399">
    <property type="entry name" value="DHquinase_II"/>
    <property type="match status" value="1"/>
</dbReference>
<dbReference type="SUPFAM" id="SSF52304">
    <property type="entry name" value="Type II 3-dehydroquinate dehydratase"/>
    <property type="match status" value="1"/>
</dbReference>
<dbReference type="PROSITE" id="PS01029">
    <property type="entry name" value="DEHYDROQUINASE_II"/>
    <property type="match status" value="1"/>
</dbReference>
<gene>
    <name evidence="1" type="primary">aroQ</name>
    <name type="ordered locus">VP2879</name>
</gene>
<organism>
    <name type="scientific">Vibrio parahaemolyticus serotype O3:K6 (strain RIMD 2210633)</name>
    <dbReference type="NCBI Taxonomy" id="223926"/>
    <lineage>
        <taxon>Bacteria</taxon>
        <taxon>Pseudomonadati</taxon>
        <taxon>Pseudomonadota</taxon>
        <taxon>Gammaproteobacteria</taxon>
        <taxon>Vibrionales</taxon>
        <taxon>Vibrionaceae</taxon>
        <taxon>Vibrio</taxon>
    </lineage>
</organism>
<comment type="function">
    <text evidence="1">Catalyzes a trans-dehydration via an enolate intermediate.</text>
</comment>
<comment type="catalytic activity">
    <reaction evidence="1">
        <text>3-dehydroquinate = 3-dehydroshikimate + H2O</text>
        <dbReference type="Rhea" id="RHEA:21096"/>
        <dbReference type="ChEBI" id="CHEBI:15377"/>
        <dbReference type="ChEBI" id="CHEBI:16630"/>
        <dbReference type="ChEBI" id="CHEBI:32364"/>
        <dbReference type="EC" id="4.2.1.10"/>
    </reaction>
</comment>
<comment type="pathway">
    <text evidence="1">Metabolic intermediate biosynthesis; chorismate biosynthesis; chorismate from D-erythrose 4-phosphate and phosphoenolpyruvate: step 3/7.</text>
</comment>
<comment type="subunit">
    <text evidence="1">Homododecamer.</text>
</comment>
<comment type="similarity">
    <text evidence="1">Belongs to the type-II 3-dehydroquinase family.</text>
</comment>
<sequence>MSAKSRILVLNGPNLNLLGLREPTHYGNNTLAQIVDALTEQAHNAGVELEHLQSNREYELIEAIHAAYGKIDFIIINPAAFTHTSVALRDALLGVAIPFIEVHLSNVHAREPFRHHSYLSDKAEGVICGLGAQGYEFALSAAINKLQAK</sequence>
<evidence type="ECO:0000255" key="1">
    <source>
        <dbReference type="HAMAP-Rule" id="MF_00169"/>
    </source>
</evidence>
<protein>
    <recommendedName>
        <fullName evidence="1">3-dehydroquinate dehydratase</fullName>
        <shortName evidence="1">3-dehydroquinase</shortName>
        <ecNumber evidence="1">4.2.1.10</ecNumber>
    </recommendedName>
    <alternativeName>
        <fullName evidence="1">Type II DHQase</fullName>
    </alternativeName>
</protein>
<keyword id="KW-0028">Amino-acid biosynthesis</keyword>
<keyword id="KW-0057">Aromatic amino acid biosynthesis</keyword>
<keyword id="KW-0456">Lyase</keyword>
<accession>Q87KU6</accession>